<sequence length="208" mass="23184">MAKLAKNKQMAVLNYIHKQVEDHGYPPTVREICSAVGLSSTSTVHGHISRLIEQGFLQKDPSKPRALEITPKGLDILGVKPIQKEIPMLGVVTAGQPILAVENATEFFPIPPSIQDNNDLFMLTIRGTSMIKAGIFNGDQVIVRKQSTAKNGDIVIAMNDDNEATCKRFYKEKTRFRLQPENDTMEPIFLDNVKILGKVVGLFRDHIF</sequence>
<proteinExistence type="inferred from homology"/>
<name>LEXA_LIMRJ</name>
<gene>
    <name evidence="1" type="primary">lexA</name>
    <name type="ordered locus">LAR_0650</name>
</gene>
<keyword id="KW-0068">Autocatalytic cleavage</keyword>
<keyword id="KW-0227">DNA damage</keyword>
<keyword id="KW-0234">DNA repair</keyword>
<keyword id="KW-0235">DNA replication</keyword>
<keyword id="KW-0238">DNA-binding</keyword>
<keyword id="KW-0378">Hydrolase</keyword>
<keyword id="KW-0678">Repressor</keyword>
<keyword id="KW-0742">SOS response</keyword>
<keyword id="KW-0804">Transcription</keyword>
<keyword id="KW-0805">Transcription regulation</keyword>
<evidence type="ECO:0000255" key="1">
    <source>
        <dbReference type="HAMAP-Rule" id="MF_00015"/>
    </source>
</evidence>
<reference key="1">
    <citation type="journal article" date="2008" name="DNA Res.">
        <title>Comparative genome analysis of Lactobacillus reuteri and Lactobacillus fermentum reveal a genomic island for reuterin and cobalamin production.</title>
        <authorList>
            <person name="Morita H."/>
            <person name="Toh H."/>
            <person name="Fukuda S."/>
            <person name="Horikawa H."/>
            <person name="Oshima K."/>
            <person name="Suzuki T."/>
            <person name="Murakami M."/>
            <person name="Hisamatsu S."/>
            <person name="Kato Y."/>
            <person name="Takizawa T."/>
            <person name="Fukuoka H."/>
            <person name="Yoshimura T."/>
            <person name="Itoh K."/>
            <person name="O'Sullivan D.J."/>
            <person name="McKay L.L."/>
            <person name="Ohno H."/>
            <person name="Kikuchi J."/>
            <person name="Masaoka T."/>
            <person name="Hattori M."/>
        </authorList>
    </citation>
    <scope>NUCLEOTIDE SEQUENCE [LARGE SCALE GENOMIC DNA]</scope>
    <source>
        <strain>JCM 1112</strain>
    </source>
</reference>
<organism>
    <name type="scientific">Limosilactobacillus reuteri subsp. reuteri (strain JCM 1112)</name>
    <name type="common">Lactobacillus reuteri</name>
    <dbReference type="NCBI Taxonomy" id="557433"/>
    <lineage>
        <taxon>Bacteria</taxon>
        <taxon>Bacillati</taxon>
        <taxon>Bacillota</taxon>
        <taxon>Bacilli</taxon>
        <taxon>Lactobacillales</taxon>
        <taxon>Lactobacillaceae</taxon>
        <taxon>Limosilactobacillus</taxon>
    </lineage>
</organism>
<protein>
    <recommendedName>
        <fullName evidence="1">LexA repressor</fullName>
        <ecNumber evidence="1">3.4.21.88</ecNumber>
    </recommendedName>
</protein>
<dbReference type="EC" id="3.4.21.88" evidence="1"/>
<dbReference type="EMBL" id="AP007281">
    <property type="protein sequence ID" value="BAG25166.1"/>
    <property type="molecule type" value="Genomic_DNA"/>
</dbReference>
<dbReference type="RefSeq" id="WP_003668202.1">
    <property type="nucleotide sequence ID" value="NC_010609.1"/>
</dbReference>
<dbReference type="SMR" id="B2G6T4"/>
<dbReference type="MEROPS" id="S24.001"/>
<dbReference type="KEGG" id="lrf:LAR_0650"/>
<dbReference type="HOGENOM" id="CLU_066192_45_1_9"/>
<dbReference type="GO" id="GO:0003677">
    <property type="term" value="F:DNA binding"/>
    <property type="evidence" value="ECO:0007669"/>
    <property type="project" value="UniProtKB-UniRule"/>
</dbReference>
<dbReference type="GO" id="GO:0004252">
    <property type="term" value="F:serine-type endopeptidase activity"/>
    <property type="evidence" value="ECO:0007669"/>
    <property type="project" value="UniProtKB-UniRule"/>
</dbReference>
<dbReference type="GO" id="GO:0006281">
    <property type="term" value="P:DNA repair"/>
    <property type="evidence" value="ECO:0007669"/>
    <property type="project" value="UniProtKB-UniRule"/>
</dbReference>
<dbReference type="GO" id="GO:0006260">
    <property type="term" value="P:DNA replication"/>
    <property type="evidence" value="ECO:0007669"/>
    <property type="project" value="UniProtKB-UniRule"/>
</dbReference>
<dbReference type="GO" id="GO:0045892">
    <property type="term" value="P:negative regulation of DNA-templated transcription"/>
    <property type="evidence" value="ECO:0007669"/>
    <property type="project" value="UniProtKB-UniRule"/>
</dbReference>
<dbReference type="GO" id="GO:0006508">
    <property type="term" value="P:proteolysis"/>
    <property type="evidence" value="ECO:0007669"/>
    <property type="project" value="InterPro"/>
</dbReference>
<dbReference type="GO" id="GO:0009432">
    <property type="term" value="P:SOS response"/>
    <property type="evidence" value="ECO:0007669"/>
    <property type="project" value="UniProtKB-UniRule"/>
</dbReference>
<dbReference type="CDD" id="cd06529">
    <property type="entry name" value="S24_LexA-like"/>
    <property type="match status" value="1"/>
</dbReference>
<dbReference type="FunFam" id="2.10.109.10:FF:000001">
    <property type="entry name" value="LexA repressor"/>
    <property type="match status" value="1"/>
</dbReference>
<dbReference type="Gene3D" id="2.10.109.10">
    <property type="entry name" value="Umud Fragment, subunit A"/>
    <property type="match status" value="1"/>
</dbReference>
<dbReference type="Gene3D" id="1.10.10.10">
    <property type="entry name" value="Winged helix-like DNA-binding domain superfamily/Winged helix DNA-binding domain"/>
    <property type="match status" value="1"/>
</dbReference>
<dbReference type="HAMAP" id="MF_00015">
    <property type="entry name" value="LexA"/>
    <property type="match status" value="1"/>
</dbReference>
<dbReference type="InterPro" id="IPR006200">
    <property type="entry name" value="LexA"/>
</dbReference>
<dbReference type="InterPro" id="IPR039418">
    <property type="entry name" value="LexA-like"/>
</dbReference>
<dbReference type="InterPro" id="IPR036286">
    <property type="entry name" value="LexA/Signal_pep-like_sf"/>
</dbReference>
<dbReference type="InterPro" id="IPR006199">
    <property type="entry name" value="LexA_DNA-bd_dom"/>
</dbReference>
<dbReference type="InterPro" id="IPR050077">
    <property type="entry name" value="LexA_repressor"/>
</dbReference>
<dbReference type="InterPro" id="IPR006197">
    <property type="entry name" value="Peptidase_S24_LexA"/>
</dbReference>
<dbReference type="InterPro" id="IPR015927">
    <property type="entry name" value="Peptidase_S24_S26A/B/C"/>
</dbReference>
<dbReference type="InterPro" id="IPR036388">
    <property type="entry name" value="WH-like_DNA-bd_sf"/>
</dbReference>
<dbReference type="InterPro" id="IPR036390">
    <property type="entry name" value="WH_DNA-bd_sf"/>
</dbReference>
<dbReference type="NCBIfam" id="TIGR00498">
    <property type="entry name" value="lexA"/>
    <property type="match status" value="1"/>
</dbReference>
<dbReference type="PANTHER" id="PTHR33516">
    <property type="entry name" value="LEXA REPRESSOR"/>
    <property type="match status" value="1"/>
</dbReference>
<dbReference type="PANTHER" id="PTHR33516:SF2">
    <property type="entry name" value="LEXA REPRESSOR-RELATED"/>
    <property type="match status" value="1"/>
</dbReference>
<dbReference type="Pfam" id="PF01726">
    <property type="entry name" value="LexA_DNA_bind"/>
    <property type="match status" value="1"/>
</dbReference>
<dbReference type="Pfam" id="PF00717">
    <property type="entry name" value="Peptidase_S24"/>
    <property type="match status" value="1"/>
</dbReference>
<dbReference type="PRINTS" id="PR00726">
    <property type="entry name" value="LEXASERPTASE"/>
</dbReference>
<dbReference type="SUPFAM" id="SSF51306">
    <property type="entry name" value="LexA/Signal peptidase"/>
    <property type="match status" value="1"/>
</dbReference>
<dbReference type="SUPFAM" id="SSF46785">
    <property type="entry name" value="Winged helix' DNA-binding domain"/>
    <property type="match status" value="1"/>
</dbReference>
<comment type="function">
    <text evidence="1">Represses a number of genes involved in the response to DNA damage (SOS response), including recA and lexA. In the presence of single-stranded DNA, RecA interacts with LexA causing an autocatalytic cleavage which disrupts the DNA-binding part of LexA, leading to derepression of the SOS regulon and eventually DNA repair.</text>
</comment>
<comment type="catalytic activity">
    <reaction evidence="1">
        <text>Hydrolysis of Ala-|-Gly bond in repressor LexA.</text>
        <dbReference type="EC" id="3.4.21.88"/>
    </reaction>
</comment>
<comment type="subunit">
    <text evidence="1">Homodimer.</text>
</comment>
<comment type="similarity">
    <text evidence="1">Belongs to the peptidase S24 family.</text>
</comment>
<feature type="chain" id="PRO_1000089573" description="LexA repressor">
    <location>
        <begin position="1"/>
        <end position="208"/>
    </location>
</feature>
<feature type="DNA-binding region" description="H-T-H motif" evidence="1">
    <location>
        <begin position="29"/>
        <end position="49"/>
    </location>
</feature>
<feature type="active site" description="For autocatalytic cleavage activity" evidence="1">
    <location>
        <position position="129"/>
    </location>
</feature>
<feature type="active site" description="For autocatalytic cleavage activity" evidence="1">
    <location>
        <position position="167"/>
    </location>
</feature>
<feature type="site" description="Cleavage; by autolysis" evidence="1">
    <location>
        <begin position="94"/>
        <end position="95"/>
    </location>
</feature>
<accession>B2G6T4</accession>